<name>SURE_MAGMM</name>
<reference key="1">
    <citation type="journal article" date="2009" name="Appl. Environ. Microbiol.">
        <title>Complete genome sequence of the chemolithoautotrophic marine magnetotactic coccus strain MC-1.</title>
        <authorList>
            <person name="Schubbe S."/>
            <person name="Williams T.J."/>
            <person name="Xie G."/>
            <person name="Kiss H.E."/>
            <person name="Brettin T.S."/>
            <person name="Martinez D."/>
            <person name="Ross C.A."/>
            <person name="Schuler D."/>
            <person name="Cox B.L."/>
            <person name="Nealson K.H."/>
            <person name="Bazylinski D.A."/>
        </authorList>
    </citation>
    <scope>NUCLEOTIDE SEQUENCE [LARGE SCALE GENOMIC DNA]</scope>
    <source>
        <strain>ATCC BAA-1437 / JCM 17883 / MC-1</strain>
    </source>
</reference>
<gene>
    <name evidence="1" type="primary">surE</name>
    <name type="ordered locus">Mmc1_0373</name>
</gene>
<accession>A0L4K6</accession>
<comment type="function">
    <text evidence="1">Nucleotidase that shows phosphatase activity on nucleoside 5'-monophosphates.</text>
</comment>
<comment type="catalytic activity">
    <reaction evidence="1">
        <text>a ribonucleoside 5'-phosphate + H2O = a ribonucleoside + phosphate</text>
        <dbReference type="Rhea" id="RHEA:12484"/>
        <dbReference type="ChEBI" id="CHEBI:15377"/>
        <dbReference type="ChEBI" id="CHEBI:18254"/>
        <dbReference type="ChEBI" id="CHEBI:43474"/>
        <dbReference type="ChEBI" id="CHEBI:58043"/>
        <dbReference type="EC" id="3.1.3.5"/>
    </reaction>
</comment>
<comment type="cofactor">
    <cofactor evidence="1">
        <name>a divalent metal cation</name>
        <dbReference type="ChEBI" id="CHEBI:60240"/>
    </cofactor>
    <text evidence="1">Binds 1 divalent metal cation per subunit.</text>
</comment>
<comment type="subcellular location">
    <subcellularLocation>
        <location evidence="1">Cytoplasm</location>
    </subcellularLocation>
</comment>
<comment type="similarity">
    <text evidence="1">Belongs to the SurE nucleotidase family.</text>
</comment>
<dbReference type="EC" id="3.1.3.5" evidence="1"/>
<dbReference type="EMBL" id="CP000471">
    <property type="protein sequence ID" value="ABK42899.1"/>
    <property type="molecule type" value="Genomic_DNA"/>
</dbReference>
<dbReference type="RefSeq" id="WP_011712069.1">
    <property type="nucleotide sequence ID" value="NC_008576.1"/>
</dbReference>
<dbReference type="SMR" id="A0L4K6"/>
<dbReference type="STRING" id="156889.Mmc1_0373"/>
<dbReference type="KEGG" id="mgm:Mmc1_0373"/>
<dbReference type="eggNOG" id="COG0496">
    <property type="taxonomic scope" value="Bacteria"/>
</dbReference>
<dbReference type="HOGENOM" id="CLU_045192_1_1_5"/>
<dbReference type="OrthoDB" id="9780815at2"/>
<dbReference type="Proteomes" id="UP000002586">
    <property type="component" value="Chromosome"/>
</dbReference>
<dbReference type="GO" id="GO:0005737">
    <property type="term" value="C:cytoplasm"/>
    <property type="evidence" value="ECO:0007669"/>
    <property type="project" value="UniProtKB-SubCell"/>
</dbReference>
<dbReference type="GO" id="GO:0008254">
    <property type="term" value="F:3'-nucleotidase activity"/>
    <property type="evidence" value="ECO:0007669"/>
    <property type="project" value="TreeGrafter"/>
</dbReference>
<dbReference type="GO" id="GO:0008253">
    <property type="term" value="F:5'-nucleotidase activity"/>
    <property type="evidence" value="ECO:0007669"/>
    <property type="project" value="UniProtKB-UniRule"/>
</dbReference>
<dbReference type="GO" id="GO:0004309">
    <property type="term" value="F:exopolyphosphatase activity"/>
    <property type="evidence" value="ECO:0007669"/>
    <property type="project" value="TreeGrafter"/>
</dbReference>
<dbReference type="GO" id="GO:0046872">
    <property type="term" value="F:metal ion binding"/>
    <property type="evidence" value="ECO:0007669"/>
    <property type="project" value="UniProtKB-UniRule"/>
</dbReference>
<dbReference type="GO" id="GO:0000166">
    <property type="term" value="F:nucleotide binding"/>
    <property type="evidence" value="ECO:0007669"/>
    <property type="project" value="UniProtKB-KW"/>
</dbReference>
<dbReference type="Gene3D" id="3.40.1210.10">
    <property type="entry name" value="Survival protein SurE-like phosphatase/nucleotidase"/>
    <property type="match status" value="1"/>
</dbReference>
<dbReference type="HAMAP" id="MF_00060">
    <property type="entry name" value="SurE"/>
    <property type="match status" value="1"/>
</dbReference>
<dbReference type="InterPro" id="IPR030048">
    <property type="entry name" value="SurE"/>
</dbReference>
<dbReference type="InterPro" id="IPR002828">
    <property type="entry name" value="SurE-like_Pase/nucleotidase"/>
</dbReference>
<dbReference type="InterPro" id="IPR036523">
    <property type="entry name" value="SurE-like_sf"/>
</dbReference>
<dbReference type="NCBIfam" id="TIGR00087">
    <property type="entry name" value="surE"/>
    <property type="match status" value="1"/>
</dbReference>
<dbReference type="PANTHER" id="PTHR30457">
    <property type="entry name" value="5'-NUCLEOTIDASE SURE"/>
    <property type="match status" value="1"/>
</dbReference>
<dbReference type="PANTHER" id="PTHR30457:SF12">
    <property type="entry name" value="5'_3'-NUCLEOTIDASE SURE"/>
    <property type="match status" value="1"/>
</dbReference>
<dbReference type="Pfam" id="PF01975">
    <property type="entry name" value="SurE"/>
    <property type="match status" value="1"/>
</dbReference>
<dbReference type="SUPFAM" id="SSF64167">
    <property type="entry name" value="SurE-like"/>
    <property type="match status" value="1"/>
</dbReference>
<proteinExistence type="inferred from homology"/>
<feature type="chain" id="PRO_1000007747" description="5'-nucleotidase SurE">
    <location>
        <begin position="1"/>
        <end position="249"/>
    </location>
</feature>
<feature type="binding site" evidence="1">
    <location>
        <position position="8"/>
    </location>
    <ligand>
        <name>a divalent metal cation</name>
        <dbReference type="ChEBI" id="CHEBI:60240"/>
    </ligand>
</feature>
<feature type="binding site" evidence="1">
    <location>
        <position position="9"/>
    </location>
    <ligand>
        <name>a divalent metal cation</name>
        <dbReference type="ChEBI" id="CHEBI:60240"/>
    </ligand>
</feature>
<feature type="binding site" evidence="1">
    <location>
        <position position="39"/>
    </location>
    <ligand>
        <name>a divalent metal cation</name>
        <dbReference type="ChEBI" id="CHEBI:60240"/>
    </ligand>
</feature>
<feature type="binding site" evidence="1">
    <location>
        <position position="91"/>
    </location>
    <ligand>
        <name>a divalent metal cation</name>
        <dbReference type="ChEBI" id="CHEBI:60240"/>
    </ligand>
</feature>
<sequence length="249" mass="27177">MLILLTNDDGIASPGLQALKDALKERHDVVTLAPVKDMSGTAHAISRGEDIKLTRIAEYEVAINGTPTDCVMAGLRMVLRRPPDLLVSGINMGANVAEDLSYSATAGAAWEGALSGIPSMAVSLCGSAAPWHFESAIKVTHMVIRQWLENPLPPGTFLNVNVPNVPEYELKNPKPTRQGLRFNWPPPPVTAAGNPAFWDPTIPTPREEEFQLATDEEALRDGFTSVTALHCLFRHPHATERLKAWSLFR</sequence>
<evidence type="ECO:0000255" key="1">
    <source>
        <dbReference type="HAMAP-Rule" id="MF_00060"/>
    </source>
</evidence>
<protein>
    <recommendedName>
        <fullName evidence="1">5'-nucleotidase SurE</fullName>
        <ecNumber evidence="1">3.1.3.5</ecNumber>
    </recommendedName>
    <alternativeName>
        <fullName evidence="1">Nucleoside 5'-monophosphate phosphohydrolase</fullName>
    </alternativeName>
</protein>
<organism>
    <name type="scientific">Magnetococcus marinus (strain ATCC BAA-1437 / JCM 17883 / MC-1)</name>
    <dbReference type="NCBI Taxonomy" id="156889"/>
    <lineage>
        <taxon>Bacteria</taxon>
        <taxon>Pseudomonadati</taxon>
        <taxon>Pseudomonadota</taxon>
        <taxon>Alphaproteobacteria</taxon>
        <taxon>Magnetococcales</taxon>
        <taxon>Magnetococcaceae</taxon>
        <taxon>Magnetococcus</taxon>
    </lineage>
</organism>
<keyword id="KW-0963">Cytoplasm</keyword>
<keyword id="KW-0378">Hydrolase</keyword>
<keyword id="KW-0479">Metal-binding</keyword>
<keyword id="KW-0547">Nucleotide-binding</keyword>
<keyword id="KW-1185">Reference proteome</keyword>